<protein>
    <recommendedName>
        <fullName evidence="1">Large ribosomal subunit protein bL21</fullName>
    </recommendedName>
    <alternativeName>
        <fullName evidence="2">50S ribosomal protein L21</fullName>
    </alternativeName>
</protein>
<reference key="1">
    <citation type="submission" date="2008-02" db="EMBL/GenBank/DDBJ databases">
        <title>Complete sequence of Synechococcus sp. PCC 7002.</title>
        <authorList>
            <person name="Li T."/>
            <person name="Zhao J."/>
            <person name="Zhao C."/>
            <person name="Liu Z."/>
            <person name="Zhao F."/>
            <person name="Marquardt J."/>
            <person name="Nomura C.T."/>
            <person name="Persson S."/>
            <person name="Detter J.C."/>
            <person name="Richardson P.M."/>
            <person name="Lanz C."/>
            <person name="Schuster S.C."/>
            <person name="Wang J."/>
            <person name="Li S."/>
            <person name="Huang X."/>
            <person name="Cai T."/>
            <person name="Yu Z."/>
            <person name="Luo J."/>
            <person name="Zhao J."/>
            <person name="Bryant D.A."/>
        </authorList>
    </citation>
    <scope>NUCLEOTIDE SEQUENCE [LARGE SCALE GENOMIC DNA]</scope>
    <source>
        <strain>ATCC 27264 / PCC 7002 / PR-6</strain>
    </source>
</reference>
<accession>B1XPE0</accession>
<organism>
    <name type="scientific">Picosynechococcus sp. (strain ATCC 27264 / PCC 7002 / PR-6)</name>
    <name type="common">Agmenellum quadruplicatum</name>
    <dbReference type="NCBI Taxonomy" id="32049"/>
    <lineage>
        <taxon>Bacteria</taxon>
        <taxon>Bacillati</taxon>
        <taxon>Cyanobacteriota</taxon>
        <taxon>Cyanophyceae</taxon>
        <taxon>Oscillatoriophycideae</taxon>
        <taxon>Chroococcales</taxon>
        <taxon>Geminocystaceae</taxon>
        <taxon>Picosynechococcus</taxon>
    </lineage>
</organism>
<feature type="chain" id="PRO_1000143860" description="Large ribosomal subunit protein bL21">
    <location>
        <begin position="1"/>
        <end position="115"/>
    </location>
</feature>
<comment type="function">
    <text evidence="1">This protein binds to 23S rRNA in the presence of protein L20.</text>
</comment>
<comment type="subunit">
    <text evidence="1">Part of the 50S ribosomal subunit. Contacts protein L20.</text>
</comment>
<comment type="similarity">
    <text evidence="1">Belongs to the bacterial ribosomal protein bL21 family.</text>
</comment>
<sequence length="115" mass="12882">MSYAIIETGGKQVRVEPGRFYDIERLDVDVDGNHTIEKVLLISDDNGVTVGQPYIDGATVEGTVVDQRRAKKVLVYKMLPKKKTRKKRGHRQYFTRFMIDSIKVGGNVVAAKADA</sequence>
<dbReference type="EMBL" id="CP000951">
    <property type="protein sequence ID" value="ACA98497.1"/>
    <property type="molecule type" value="Genomic_DNA"/>
</dbReference>
<dbReference type="RefSeq" id="WP_012306121.1">
    <property type="nucleotide sequence ID" value="NZ_JAHHPU010000001.1"/>
</dbReference>
<dbReference type="SMR" id="B1XPE0"/>
<dbReference type="STRING" id="32049.SYNPCC7002_A0490"/>
<dbReference type="KEGG" id="syp:SYNPCC7002_A0490"/>
<dbReference type="eggNOG" id="COG0261">
    <property type="taxonomic scope" value="Bacteria"/>
</dbReference>
<dbReference type="HOGENOM" id="CLU_061463_1_2_3"/>
<dbReference type="Proteomes" id="UP000001688">
    <property type="component" value="Chromosome"/>
</dbReference>
<dbReference type="GO" id="GO:0005737">
    <property type="term" value="C:cytoplasm"/>
    <property type="evidence" value="ECO:0007669"/>
    <property type="project" value="UniProtKB-ARBA"/>
</dbReference>
<dbReference type="GO" id="GO:1990904">
    <property type="term" value="C:ribonucleoprotein complex"/>
    <property type="evidence" value="ECO:0007669"/>
    <property type="project" value="UniProtKB-KW"/>
</dbReference>
<dbReference type="GO" id="GO:0005840">
    <property type="term" value="C:ribosome"/>
    <property type="evidence" value="ECO:0007669"/>
    <property type="project" value="UniProtKB-KW"/>
</dbReference>
<dbReference type="GO" id="GO:0019843">
    <property type="term" value="F:rRNA binding"/>
    <property type="evidence" value="ECO:0007669"/>
    <property type="project" value="UniProtKB-UniRule"/>
</dbReference>
<dbReference type="GO" id="GO:0003735">
    <property type="term" value="F:structural constituent of ribosome"/>
    <property type="evidence" value="ECO:0007669"/>
    <property type="project" value="InterPro"/>
</dbReference>
<dbReference type="GO" id="GO:0006412">
    <property type="term" value="P:translation"/>
    <property type="evidence" value="ECO:0007669"/>
    <property type="project" value="UniProtKB-UniRule"/>
</dbReference>
<dbReference type="HAMAP" id="MF_01363">
    <property type="entry name" value="Ribosomal_bL21"/>
    <property type="match status" value="1"/>
</dbReference>
<dbReference type="InterPro" id="IPR028909">
    <property type="entry name" value="bL21-like"/>
</dbReference>
<dbReference type="InterPro" id="IPR036164">
    <property type="entry name" value="bL21-like_sf"/>
</dbReference>
<dbReference type="InterPro" id="IPR001787">
    <property type="entry name" value="Ribosomal_bL21"/>
</dbReference>
<dbReference type="InterPro" id="IPR018258">
    <property type="entry name" value="Ribosomal_bL21_CS"/>
</dbReference>
<dbReference type="NCBIfam" id="TIGR00061">
    <property type="entry name" value="L21"/>
    <property type="match status" value="1"/>
</dbReference>
<dbReference type="PANTHER" id="PTHR21349">
    <property type="entry name" value="50S RIBOSOMAL PROTEIN L21"/>
    <property type="match status" value="1"/>
</dbReference>
<dbReference type="PANTHER" id="PTHR21349:SF0">
    <property type="entry name" value="LARGE RIBOSOMAL SUBUNIT PROTEIN BL21M"/>
    <property type="match status" value="1"/>
</dbReference>
<dbReference type="Pfam" id="PF00829">
    <property type="entry name" value="Ribosomal_L21p"/>
    <property type="match status" value="1"/>
</dbReference>
<dbReference type="SUPFAM" id="SSF141091">
    <property type="entry name" value="L21p-like"/>
    <property type="match status" value="1"/>
</dbReference>
<dbReference type="PROSITE" id="PS01169">
    <property type="entry name" value="RIBOSOMAL_L21"/>
    <property type="match status" value="1"/>
</dbReference>
<name>RL21_PICP2</name>
<gene>
    <name evidence="1" type="primary">rplU</name>
    <name evidence="1" type="synonym">rpl21</name>
    <name type="ordered locus">SYNPCC7002_A0490</name>
</gene>
<proteinExistence type="inferred from homology"/>
<evidence type="ECO:0000255" key="1">
    <source>
        <dbReference type="HAMAP-Rule" id="MF_01363"/>
    </source>
</evidence>
<evidence type="ECO:0000305" key="2"/>
<keyword id="KW-1185">Reference proteome</keyword>
<keyword id="KW-0687">Ribonucleoprotein</keyword>
<keyword id="KW-0689">Ribosomal protein</keyword>
<keyword id="KW-0694">RNA-binding</keyword>
<keyword id="KW-0699">rRNA-binding</keyword>